<comment type="function">
    <text evidence="1">Part of a complex that catalyzes the reversible reduction of CoM-S-S-CoB to the thiol-coenzymes H-S-CoM (coenzyme M) and H-S-CoB (coenzyme B).</text>
</comment>
<comment type="catalytic activity">
    <reaction evidence="1">
        <text>methanophenazine + coenzyme B + coenzyme M = dihydromethanophenazine + coenzyme M-coenzyme B heterodisulfide</text>
        <dbReference type="Rhea" id="RHEA:18085"/>
        <dbReference type="ChEBI" id="CHEBI:29118"/>
        <dbReference type="ChEBI" id="CHEBI:50375"/>
        <dbReference type="ChEBI" id="CHEBI:58319"/>
        <dbReference type="ChEBI" id="CHEBI:58411"/>
        <dbReference type="ChEBI" id="CHEBI:58596"/>
        <dbReference type="EC" id="1.8.98.1"/>
    </reaction>
</comment>
<comment type="cofactor">
    <cofactor evidence="3">
        <name>[4Fe-4S] cluster</name>
        <dbReference type="ChEBI" id="CHEBI:49883"/>
    </cofactor>
    <text evidence="3">Binds 2 [4Fe-4S] clusters per subunit.</text>
</comment>
<comment type="pathway">
    <text evidence="1">Cofactor metabolism; coenzyme M-coenzyme B heterodisulfide reduction; coenzyme B and coenzyme M from coenzyme M-coenzyme B heterodisulfide: step 1/1.</text>
</comment>
<comment type="subunit">
    <text evidence="2">The dihydromethanophenazine:CoB--CoM heterodisulfide reductase is composed of two subunits; HdrD and HdrE.</text>
</comment>
<comment type="similarity">
    <text evidence="4">Belongs to the HdrD family.</text>
</comment>
<sequence length="409" mass="45202">MAKKTPSIDTKNLTAVQLMELDSCTRCGECVKWCPTYAASGQKPGLAPRDKILRWRQYMNKSYGLKAKLFGPTEIPQSELEEFKDDVHGCTTCGICATVCESGINTVELWESLRTNLVKKGIGPFGKQGMFPKLIGQYHNPYLLDQKDRLAWVPPDVKIADKANIVYFTGCTAGYKQLALAFATSRVLNKLGIEFTMLGEDEWCCGSALIRTGQVHVNDVAKELAKHNVEAIKAKGATKVLYACAGCFRASKVDWPRLLGEELPFEVVHITEFLEDLIKKDKIKWEKSLDKTVTYHDPCHLGRHVGVFEPPRYVLSHIPGVKFVEMDRVKEFQRCCGAGGGVKAGIPDLALSVAESRVKDALDTNADVLSSACPFCKRNLMDGRDSLKADIEVEDVIVLVAQALGLSVE</sequence>
<proteinExistence type="inferred from homology"/>
<gene>
    <name type="primary">hdrD</name>
    <name type="ordered locus">MA_0688</name>
</gene>
<keyword id="KW-0004">4Fe-4S</keyword>
<keyword id="KW-0408">Iron</keyword>
<keyword id="KW-0411">Iron-sulfur</keyword>
<keyword id="KW-0479">Metal-binding</keyword>
<keyword id="KW-0484">Methanogenesis</keyword>
<keyword id="KW-0560">Oxidoreductase</keyword>
<keyword id="KW-1185">Reference proteome</keyword>
<keyword id="KW-0677">Repeat</keyword>
<evidence type="ECO:0000250" key="1">
    <source>
        <dbReference type="UniProtKB" id="A0A0E3NEE1"/>
    </source>
</evidence>
<evidence type="ECO:0000250" key="2">
    <source>
        <dbReference type="UniProtKB" id="P96797"/>
    </source>
</evidence>
<evidence type="ECO:0000255" key="3">
    <source>
        <dbReference type="PROSITE-ProRule" id="PRU00711"/>
    </source>
</evidence>
<evidence type="ECO:0000305" key="4"/>
<reference key="1">
    <citation type="journal article" date="2002" name="Genome Res.">
        <title>The genome of Methanosarcina acetivorans reveals extensive metabolic and physiological diversity.</title>
        <authorList>
            <person name="Galagan J.E."/>
            <person name="Nusbaum C."/>
            <person name="Roy A."/>
            <person name="Endrizzi M.G."/>
            <person name="Macdonald P."/>
            <person name="FitzHugh W."/>
            <person name="Calvo S."/>
            <person name="Engels R."/>
            <person name="Smirnov S."/>
            <person name="Atnoor D."/>
            <person name="Brown A."/>
            <person name="Allen N."/>
            <person name="Naylor J."/>
            <person name="Stange-Thomann N."/>
            <person name="DeArellano K."/>
            <person name="Johnson R."/>
            <person name="Linton L."/>
            <person name="McEwan P."/>
            <person name="McKernan K."/>
            <person name="Talamas J."/>
            <person name="Tirrell A."/>
            <person name="Ye W."/>
            <person name="Zimmer A."/>
            <person name="Barber R.D."/>
            <person name="Cann I."/>
            <person name="Graham D.E."/>
            <person name="Grahame D.A."/>
            <person name="Guss A.M."/>
            <person name="Hedderich R."/>
            <person name="Ingram-Smith C."/>
            <person name="Kuettner H.C."/>
            <person name="Krzycki J.A."/>
            <person name="Leigh J.A."/>
            <person name="Li W."/>
            <person name="Liu J."/>
            <person name="Mukhopadhyay B."/>
            <person name="Reeve J.N."/>
            <person name="Smith K."/>
            <person name="Springer T.A."/>
            <person name="Umayam L.A."/>
            <person name="White O."/>
            <person name="White R.H."/>
            <person name="de Macario E.C."/>
            <person name="Ferry J.G."/>
            <person name="Jarrell K.F."/>
            <person name="Jing H."/>
            <person name="Macario A.J.L."/>
            <person name="Paulsen I.T."/>
            <person name="Pritchett M."/>
            <person name="Sowers K.R."/>
            <person name="Swanson R.V."/>
            <person name="Zinder S.H."/>
            <person name="Lander E."/>
            <person name="Metcalf W.W."/>
            <person name="Birren B."/>
        </authorList>
    </citation>
    <scope>NUCLEOTIDE SEQUENCE [LARGE SCALE GENOMIC DNA]</scope>
    <source>
        <strain>ATCC 35395 / DSM 2834 / JCM 12185 / C2A</strain>
    </source>
</reference>
<name>HDRD_METAC</name>
<protein>
    <recommendedName>
        <fullName evidence="1">Dihydromethanophenazine:CoB--CoM heterodisulfide reductase subunit D</fullName>
        <ecNumber evidence="1">1.8.98.1</ecNumber>
    </recommendedName>
    <alternativeName>
        <fullName evidence="1">CoB--CoM heterodisulfide reductase iron-sulfur subunit D</fullName>
    </alternativeName>
    <alternativeName>
        <fullName evidence="1">Coenzyme B:coenzyme M:methanophenazine oxidoreductase subunit D</fullName>
    </alternativeName>
</protein>
<accession>Q8TSV7</accession>
<feature type="chain" id="PRO_0000150079" description="Dihydromethanophenazine:CoB--CoM heterodisulfide reductase subunit D">
    <location>
        <begin position="1"/>
        <end position="409"/>
    </location>
</feature>
<feature type="domain" description="4Fe-4S ferredoxin-type 1" evidence="3">
    <location>
        <begin position="14"/>
        <end position="44"/>
    </location>
</feature>
<feature type="domain" description="4Fe-4S ferredoxin-type 2" evidence="3">
    <location>
        <begin position="81"/>
        <end position="110"/>
    </location>
</feature>
<feature type="binding site" evidence="3">
    <location>
        <position position="24"/>
    </location>
    <ligand>
        <name>[4Fe-4S] cluster</name>
        <dbReference type="ChEBI" id="CHEBI:49883"/>
        <label>1</label>
    </ligand>
</feature>
<feature type="binding site" evidence="3">
    <location>
        <position position="27"/>
    </location>
    <ligand>
        <name>[4Fe-4S] cluster</name>
        <dbReference type="ChEBI" id="CHEBI:49883"/>
        <label>1</label>
    </ligand>
</feature>
<feature type="binding site" evidence="3">
    <location>
        <position position="30"/>
    </location>
    <ligand>
        <name>[4Fe-4S] cluster</name>
        <dbReference type="ChEBI" id="CHEBI:49883"/>
        <label>1</label>
    </ligand>
</feature>
<feature type="binding site" evidence="3">
    <location>
        <position position="34"/>
    </location>
    <ligand>
        <name>[4Fe-4S] cluster</name>
        <dbReference type="ChEBI" id="CHEBI:49883"/>
        <label>2</label>
    </ligand>
</feature>
<feature type="binding site" evidence="3">
    <location>
        <position position="90"/>
    </location>
    <ligand>
        <name>[4Fe-4S] cluster</name>
        <dbReference type="ChEBI" id="CHEBI:49883"/>
        <label>2</label>
    </ligand>
</feature>
<feature type="binding site" evidence="3">
    <location>
        <position position="93"/>
    </location>
    <ligand>
        <name>[4Fe-4S] cluster</name>
        <dbReference type="ChEBI" id="CHEBI:49883"/>
        <label>2</label>
    </ligand>
</feature>
<feature type="binding site" evidence="3">
    <location>
        <position position="96"/>
    </location>
    <ligand>
        <name>[4Fe-4S] cluster</name>
        <dbReference type="ChEBI" id="CHEBI:49883"/>
        <label>2</label>
    </ligand>
</feature>
<feature type="binding site" evidence="3">
    <location>
        <position position="100"/>
    </location>
    <ligand>
        <name>[4Fe-4S] cluster</name>
        <dbReference type="ChEBI" id="CHEBI:49883"/>
        <label>1</label>
    </ligand>
</feature>
<dbReference type="EC" id="1.8.98.1" evidence="1"/>
<dbReference type="EMBL" id="AE010299">
    <property type="protein sequence ID" value="AAM04128.1"/>
    <property type="molecule type" value="Genomic_DNA"/>
</dbReference>
<dbReference type="RefSeq" id="WP_011020733.1">
    <property type="nucleotide sequence ID" value="NC_003552.1"/>
</dbReference>
<dbReference type="SMR" id="Q8TSV7"/>
<dbReference type="FunCoup" id="Q8TSV7">
    <property type="interactions" value="71"/>
</dbReference>
<dbReference type="STRING" id="188937.MA_0688"/>
<dbReference type="DNASU" id="1472580"/>
<dbReference type="EnsemblBacteria" id="AAM04128">
    <property type="protein sequence ID" value="AAM04128"/>
    <property type="gene ID" value="MA_0688"/>
</dbReference>
<dbReference type="GeneID" id="1472580"/>
<dbReference type="KEGG" id="mac:MA_0688"/>
<dbReference type="HOGENOM" id="CLU_023081_2_0_2"/>
<dbReference type="InParanoid" id="Q8TSV7"/>
<dbReference type="OrthoDB" id="42878at2157"/>
<dbReference type="PhylomeDB" id="Q8TSV7"/>
<dbReference type="UniPathway" id="UPA00647">
    <property type="reaction ID" value="UER00700"/>
</dbReference>
<dbReference type="Proteomes" id="UP000002487">
    <property type="component" value="Chromosome"/>
</dbReference>
<dbReference type="GO" id="GO:0051539">
    <property type="term" value="F:4 iron, 4 sulfur cluster binding"/>
    <property type="evidence" value="ECO:0007669"/>
    <property type="project" value="UniProtKB-KW"/>
</dbReference>
<dbReference type="GO" id="GO:0051912">
    <property type="term" value="F:CoB--CoM heterodisulfide reductase activity"/>
    <property type="evidence" value="ECO:0007669"/>
    <property type="project" value="UniProtKB-EC"/>
</dbReference>
<dbReference type="GO" id="GO:0046872">
    <property type="term" value="F:metal ion binding"/>
    <property type="evidence" value="ECO:0007669"/>
    <property type="project" value="UniProtKB-KW"/>
</dbReference>
<dbReference type="GO" id="GO:0015948">
    <property type="term" value="P:methanogenesis"/>
    <property type="evidence" value="ECO:0007669"/>
    <property type="project" value="UniProtKB-KW"/>
</dbReference>
<dbReference type="Gene3D" id="1.10.1060.10">
    <property type="entry name" value="Alpha-helical ferredoxin"/>
    <property type="match status" value="1"/>
</dbReference>
<dbReference type="InterPro" id="IPR017896">
    <property type="entry name" value="4Fe4S_Fe-S-bd"/>
</dbReference>
<dbReference type="InterPro" id="IPR017900">
    <property type="entry name" value="4Fe4S_Fe_S_CS"/>
</dbReference>
<dbReference type="InterPro" id="IPR004017">
    <property type="entry name" value="Cys_rich_dom"/>
</dbReference>
<dbReference type="InterPro" id="IPR051278">
    <property type="entry name" value="HdrB/HdrD_reductase"/>
</dbReference>
<dbReference type="InterPro" id="IPR009051">
    <property type="entry name" value="Helical_ferredxn"/>
</dbReference>
<dbReference type="PANTHER" id="PTHR42947">
    <property type="entry name" value="COB--COM HETERODISULFIDE REDUCTASE SUBUNIT B 1"/>
    <property type="match status" value="1"/>
</dbReference>
<dbReference type="PANTHER" id="PTHR42947:SF1">
    <property type="entry name" value="COB--COM HETERODISULFIDE REDUCTASE SUBUNIT B 1"/>
    <property type="match status" value="1"/>
</dbReference>
<dbReference type="Pfam" id="PF02754">
    <property type="entry name" value="CCG"/>
    <property type="match status" value="2"/>
</dbReference>
<dbReference type="Pfam" id="PF13183">
    <property type="entry name" value="Fer4_8"/>
    <property type="match status" value="1"/>
</dbReference>
<dbReference type="SUPFAM" id="SSF46548">
    <property type="entry name" value="alpha-helical ferredoxin"/>
    <property type="match status" value="1"/>
</dbReference>
<dbReference type="PROSITE" id="PS00198">
    <property type="entry name" value="4FE4S_FER_1"/>
    <property type="match status" value="2"/>
</dbReference>
<dbReference type="PROSITE" id="PS51379">
    <property type="entry name" value="4FE4S_FER_2"/>
    <property type="match status" value="2"/>
</dbReference>
<organism>
    <name type="scientific">Methanosarcina acetivorans (strain ATCC 35395 / DSM 2834 / JCM 12185 / C2A)</name>
    <dbReference type="NCBI Taxonomy" id="188937"/>
    <lineage>
        <taxon>Archaea</taxon>
        <taxon>Methanobacteriati</taxon>
        <taxon>Methanobacteriota</taxon>
        <taxon>Stenosarchaea group</taxon>
        <taxon>Methanomicrobia</taxon>
        <taxon>Methanosarcinales</taxon>
        <taxon>Methanosarcinaceae</taxon>
        <taxon>Methanosarcina</taxon>
    </lineage>
</organism>